<comment type="function">
    <text evidence="1">Assists in the loading of diacylglycerol, generated from triacylglycerol stores in the fat body through the action of adipokinetic hormone, into lipophorin, the hemolymph lipoprotein. It increases the lipid carrying capacity of lipophorin by covering the expanding hydrophobic surface resulting from diacylglycerol uptake. It thus plays a critical role in the transport of lipids during flight in several species of insects (By similarity).</text>
</comment>
<comment type="subunit">
    <text evidence="1">Equilibrium between a soluble monomer and a bound lipoprotein form. Apolipophorin-3 associates with lipophorin during lipid loading until each particle contains 9 or 14 molecules of apolipophorin-3 (By similarity).</text>
</comment>
<comment type="subcellular location">
    <subcellularLocation>
        <location evidence="3">Secreted</location>
    </subcellularLocation>
</comment>
<comment type="tissue specificity">
    <text evidence="3">Hemolymph.</text>
</comment>
<comment type="similarity">
    <text evidence="2">Belongs to the insect apolipophorin-3 family.</text>
</comment>
<evidence type="ECO:0000250" key="1">
    <source>
        <dbReference type="UniProtKB" id="P13276"/>
    </source>
</evidence>
<evidence type="ECO:0000255" key="2"/>
<evidence type="ECO:0000269" key="3">
    <source ref="1"/>
</evidence>
<evidence type="ECO:0000305" key="4"/>
<sequence>DAAQVPDFATAVQNLXHTLSEAA</sequence>
<organism>
    <name type="scientific">Melanoplus sanguinipes</name>
    <name type="common">Migratory grasshopper</name>
    <dbReference type="NCBI Taxonomy" id="65742"/>
    <lineage>
        <taxon>Eukaryota</taxon>
        <taxon>Metazoa</taxon>
        <taxon>Ecdysozoa</taxon>
        <taxon>Arthropoda</taxon>
        <taxon>Hexapoda</taxon>
        <taxon>Insecta</taxon>
        <taxon>Pterygota</taxon>
        <taxon>Neoptera</taxon>
        <taxon>Polyneoptera</taxon>
        <taxon>Orthoptera</taxon>
        <taxon>Caelifera</taxon>
        <taxon>Acrididea</taxon>
        <taxon>Acridomorpha</taxon>
        <taxon>Acridoidea</taxon>
        <taxon>Acrididae</taxon>
        <taxon>Melanoplinae</taxon>
        <taxon>Melanoplini</taxon>
        <taxon>Melanoplus</taxon>
    </lineage>
</organism>
<feature type="chain" id="PRO_0000402827" description="Apolipophorin-3">
    <location>
        <begin position="1"/>
        <end position="23" status="greater than"/>
    </location>
</feature>
<feature type="non-terminal residue">
    <location>
        <position position="23"/>
    </location>
</feature>
<accession>P86829</accession>
<protein>
    <recommendedName>
        <fullName evidence="1">Apolipophorin-3</fullName>
    </recommendedName>
    <alternativeName>
        <fullName>Apolipophorin-III</fullName>
        <shortName evidence="1">ApoLp-III</shortName>
    </alternativeName>
</protein>
<dbReference type="GO" id="GO:0005576">
    <property type="term" value="C:extracellular region"/>
    <property type="evidence" value="ECO:0007669"/>
    <property type="project" value="UniProtKB-SubCell"/>
</dbReference>
<dbReference type="GO" id="GO:0006869">
    <property type="term" value="P:lipid transport"/>
    <property type="evidence" value="ECO:0007669"/>
    <property type="project" value="UniProtKB-KW"/>
</dbReference>
<reference evidence="4" key="1">
    <citation type="submission" date="2010-09" db="UniProtKB">
        <authorList>
            <person name="Jones N.T."/>
            <person name="Montemayor T.T."/>
            <person name="Greenburg B."/>
            <person name="Rankin M.A."/>
        </authorList>
    </citation>
    <scope>PROTEIN SEQUENCE</scope>
    <scope>SUBCELLULAR LOCATION</scope>
    <scope>TISSUE SPECIFICITY</scope>
    <source>
        <tissue>Hemolymph</tissue>
    </source>
</reference>
<proteinExistence type="evidence at protein level"/>
<keyword id="KW-0903">Direct protein sequencing</keyword>
<keyword id="KW-0445">Lipid transport</keyword>
<keyword id="KW-0964">Secreted</keyword>
<keyword id="KW-0813">Transport</keyword>
<name>APL3_MELSA</name>